<accession>Q08409</accession>
<accession>D6W278</accession>
<accession>O94147</accession>
<protein>
    <recommendedName>
        <fullName>ATP-dependent permease AUS1</fullName>
    </recommendedName>
</protein>
<feature type="chain" id="PRO_0000093434" description="ATP-dependent permease AUS1">
    <location>
        <begin position="1"/>
        <end position="1394"/>
    </location>
</feature>
<feature type="topological domain" description="Cytoplasmic" evidence="1">
    <location>
        <begin position="1"/>
        <end position="420"/>
    </location>
</feature>
<feature type="transmembrane region" description="Helical" evidence="1">
    <location>
        <begin position="421"/>
        <end position="443"/>
    </location>
</feature>
<feature type="transmembrane region" description="Helical" evidence="1">
    <location>
        <begin position="468"/>
        <end position="490"/>
    </location>
</feature>
<feature type="transmembrane region" description="Helical" evidence="1">
    <location>
        <begin position="497"/>
        <end position="519"/>
    </location>
</feature>
<feature type="transmembrane region" description="Helical" evidence="1">
    <location>
        <begin position="529"/>
        <end position="551"/>
    </location>
</feature>
<feature type="transmembrane region" description="Helical" evidence="1">
    <location>
        <begin position="558"/>
        <end position="575"/>
    </location>
</feature>
<feature type="transmembrane region" description="Helical" evidence="1">
    <location>
        <begin position="636"/>
        <end position="658"/>
    </location>
</feature>
<feature type="topological domain" description="Cytoplasmic" evidence="1">
    <location>
        <begin position="659"/>
        <end position="1080"/>
    </location>
</feature>
<feature type="transmembrane region" description="Helical" evidence="1">
    <location>
        <begin position="1081"/>
        <end position="1103"/>
    </location>
</feature>
<feature type="transmembrane region" description="Helical" evidence="1">
    <location>
        <begin position="1107"/>
        <end position="1129"/>
    </location>
</feature>
<feature type="transmembrane region" description="Helical" evidence="1">
    <location>
        <begin position="1156"/>
        <end position="1178"/>
    </location>
</feature>
<feature type="transmembrane region" description="Helical" evidence="1">
    <location>
        <begin position="1193"/>
        <end position="1215"/>
    </location>
</feature>
<feature type="transmembrane region" description="Helical" evidence="1">
    <location>
        <begin position="1224"/>
        <end position="1246"/>
    </location>
</feature>
<feature type="transmembrane region" description="Helical" evidence="1">
    <location>
        <begin position="1346"/>
        <end position="1368"/>
    </location>
</feature>
<feature type="topological domain" description="Cytoplasmic" evidence="1">
    <location>
        <begin position="1369"/>
        <end position="1394"/>
    </location>
</feature>
<feature type="domain" description="ABC transporter 1" evidence="2">
    <location>
        <begin position="33"/>
        <end position="273"/>
    </location>
</feature>
<feature type="domain" description="ABC transporter 2" evidence="2">
    <location>
        <begin position="751"/>
        <end position="978"/>
    </location>
</feature>
<feature type="binding site" evidence="2">
    <location>
        <begin position="782"/>
        <end position="789"/>
    </location>
    <ligand>
        <name>ATP</name>
        <dbReference type="ChEBI" id="CHEBI:30616"/>
    </ligand>
</feature>
<evidence type="ECO:0000255" key="1"/>
<evidence type="ECO:0000255" key="2">
    <source>
        <dbReference type="PROSITE-ProRule" id="PRU00434"/>
    </source>
</evidence>
<evidence type="ECO:0000269" key="3">
    <source>
    </source>
</evidence>
<evidence type="ECO:0000305" key="4"/>
<proteinExistence type="inferred from homology"/>
<gene>
    <name type="primary">AUS1</name>
    <name type="ordered locus">YOR011W</name>
</gene>
<dbReference type="EMBL" id="Z74919">
    <property type="protein sequence ID" value="CAA99199.1"/>
    <property type="molecule type" value="Genomic_DNA"/>
</dbReference>
<dbReference type="EMBL" id="Z74920">
    <property type="protein sequence ID" value="CAA99202.1"/>
    <property type="molecule type" value="Genomic_DNA"/>
</dbReference>
<dbReference type="EMBL" id="BK006948">
    <property type="protein sequence ID" value="DAA10794.1"/>
    <property type="molecule type" value="Genomic_DNA"/>
</dbReference>
<dbReference type="PIR" id="S66876">
    <property type="entry name" value="S66876"/>
</dbReference>
<dbReference type="RefSeq" id="NP_014654.1">
    <property type="nucleotide sequence ID" value="NM_001183430.1"/>
</dbReference>
<dbReference type="SMR" id="Q08409"/>
<dbReference type="BioGRID" id="34416">
    <property type="interactions" value="91"/>
</dbReference>
<dbReference type="DIP" id="DIP-994N"/>
<dbReference type="FunCoup" id="Q08409">
    <property type="interactions" value="327"/>
</dbReference>
<dbReference type="IntAct" id="Q08409">
    <property type="interactions" value="48"/>
</dbReference>
<dbReference type="MINT" id="Q08409"/>
<dbReference type="STRING" id="4932.YOR011W"/>
<dbReference type="TCDB" id="3.A.1.205.15">
    <property type="family name" value="the atp-binding cassette (abc) superfamily"/>
</dbReference>
<dbReference type="PaxDb" id="4932-YOR011W"/>
<dbReference type="PeptideAtlas" id="Q08409"/>
<dbReference type="EnsemblFungi" id="YOR011W_mRNA">
    <property type="protein sequence ID" value="YOR011W"/>
    <property type="gene ID" value="YOR011W"/>
</dbReference>
<dbReference type="GeneID" id="854175"/>
<dbReference type="KEGG" id="sce:YOR011W"/>
<dbReference type="AGR" id="SGD:S000005537"/>
<dbReference type="SGD" id="S000005537">
    <property type="gene designation" value="AUS1"/>
</dbReference>
<dbReference type="VEuPathDB" id="FungiDB:YOR011W"/>
<dbReference type="eggNOG" id="KOG0065">
    <property type="taxonomic scope" value="Eukaryota"/>
</dbReference>
<dbReference type="GeneTree" id="ENSGT00940000176496"/>
<dbReference type="HOGENOM" id="CLU_000604_35_0_1"/>
<dbReference type="InParanoid" id="Q08409"/>
<dbReference type="OMA" id="QAIFCTI"/>
<dbReference type="OrthoDB" id="66620at2759"/>
<dbReference type="BioCyc" id="YEAST:G3O-33561-MONOMER"/>
<dbReference type="BioGRID-ORCS" id="854175">
    <property type="hits" value="0 hits in 10 CRISPR screens"/>
</dbReference>
<dbReference type="PRO" id="PR:Q08409"/>
<dbReference type="Proteomes" id="UP000002311">
    <property type="component" value="Chromosome XV"/>
</dbReference>
<dbReference type="RNAct" id="Q08409">
    <property type="molecule type" value="protein"/>
</dbReference>
<dbReference type="GO" id="GO:0071944">
    <property type="term" value="C:cell periphery"/>
    <property type="evidence" value="ECO:0007005"/>
    <property type="project" value="SGD"/>
</dbReference>
<dbReference type="GO" id="GO:0005739">
    <property type="term" value="C:mitochondrion"/>
    <property type="evidence" value="ECO:0007005"/>
    <property type="project" value="SGD"/>
</dbReference>
<dbReference type="GO" id="GO:0005886">
    <property type="term" value="C:plasma membrane"/>
    <property type="evidence" value="ECO:0000314"/>
    <property type="project" value="SGD"/>
</dbReference>
<dbReference type="GO" id="GO:0034041">
    <property type="term" value="F:ABC-type sterol transporter activity"/>
    <property type="evidence" value="ECO:0000315"/>
    <property type="project" value="SGD"/>
</dbReference>
<dbReference type="GO" id="GO:0005524">
    <property type="term" value="F:ATP binding"/>
    <property type="evidence" value="ECO:0007669"/>
    <property type="project" value="UniProtKB-KW"/>
</dbReference>
<dbReference type="GO" id="GO:0016887">
    <property type="term" value="F:ATP hydrolysis activity"/>
    <property type="evidence" value="ECO:0007669"/>
    <property type="project" value="InterPro"/>
</dbReference>
<dbReference type="GO" id="GO:0035376">
    <property type="term" value="P:sterol import"/>
    <property type="evidence" value="ECO:0000315"/>
    <property type="project" value="SGD"/>
</dbReference>
<dbReference type="CDD" id="cd03233">
    <property type="entry name" value="ABCG_PDR_domain1"/>
    <property type="match status" value="1"/>
</dbReference>
<dbReference type="CDD" id="cd03232">
    <property type="entry name" value="ABCG_PDR_domain2"/>
    <property type="match status" value="1"/>
</dbReference>
<dbReference type="FunFam" id="3.40.50.300:FF:001618">
    <property type="entry name" value="ABC transporter"/>
    <property type="match status" value="1"/>
</dbReference>
<dbReference type="FunFam" id="3.40.50.300:FF:001648">
    <property type="entry name" value="ABC transporter"/>
    <property type="match status" value="1"/>
</dbReference>
<dbReference type="Gene3D" id="3.40.50.300">
    <property type="entry name" value="P-loop containing nucleotide triphosphate hydrolases"/>
    <property type="match status" value="2"/>
</dbReference>
<dbReference type="InterPro" id="IPR003593">
    <property type="entry name" value="AAA+_ATPase"/>
</dbReference>
<dbReference type="InterPro" id="IPR013525">
    <property type="entry name" value="ABC2_TM"/>
</dbReference>
<dbReference type="InterPro" id="IPR003439">
    <property type="entry name" value="ABC_transporter-like_ATP-bd"/>
</dbReference>
<dbReference type="InterPro" id="IPR017871">
    <property type="entry name" value="ABC_transporter-like_CS"/>
</dbReference>
<dbReference type="InterPro" id="IPR043926">
    <property type="entry name" value="ABCG_dom"/>
</dbReference>
<dbReference type="InterPro" id="IPR034001">
    <property type="entry name" value="ABCG_PDR_1"/>
</dbReference>
<dbReference type="InterPro" id="IPR034003">
    <property type="entry name" value="ABCG_PDR_2"/>
</dbReference>
<dbReference type="InterPro" id="IPR027417">
    <property type="entry name" value="P-loop_NTPase"/>
</dbReference>
<dbReference type="InterPro" id="IPR010929">
    <property type="entry name" value="PDR_CDR_ABC"/>
</dbReference>
<dbReference type="PANTHER" id="PTHR19241">
    <property type="entry name" value="ATP-BINDING CASSETTE TRANSPORTER"/>
    <property type="match status" value="1"/>
</dbReference>
<dbReference type="Pfam" id="PF01061">
    <property type="entry name" value="ABC2_membrane"/>
    <property type="match status" value="2"/>
</dbReference>
<dbReference type="Pfam" id="PF19055">
    <property type="entry name" value="ABC2_membrane_7"/>
    <property type="match status" value="1"/>
</dbReference>
<dbReference type="Pfam" id="PF00005">
    <property type="entry name" value="ABC_tran"/>
    <property type="match status" value="2"/>
</dbReference>
<dbReference type="Pfam" id="PF06422">
    <property type="entry name" value="PDR_CDR"/>
    <property type="match status" value="1"/>
</dbReference>
<dbReference type="SMART" id="SM00382">
    <property type="entry name" value="AAA"/>
    <property type="match status" value="1"/>
</dbReference>
<dbReference type="SUPFAM" id="SSF52540">
    <property type="entry name" value="P-loop containing nucleoside triphosphate hydrolases"/>
    <property type="match status" value="2"/>
</dbReference>
<dbReference type="PROSITE" id="PS00211">
    <property type="entry name" value="ABC_TRANSPORTER_1"/>
    <property type="match status" value="1"/>
</dbReference>
<dbReference type="PROSITE" id="PS50893">
    <property type="entry name" value="ABC_TRANSPORTER_2"/>
    <property type="match status" value="2"/>
</dbReference>
<reference key="1">
    <citation type="journal article" date="1997" name="Nature">
        <title>The nucleotide sequence of Saccharomyces cerevisiae chromosome XV.</title>
        <authorList>
            <person name="Dujon B."/>
            <person name="Albermann K."/>
            <person name="Aldea M."/>
            <person name="Alexandraki D."/>
            <person name="Ansorge W."/>
            <person name="Arino J."/>
            <person name="Benes V."/>
            <person name="Bohn C."/>
            <person name="Bolotin-Fukuhara M."/>
            <person name="Bordonne R."/>
            <person name="Boyer J."/>
            <person name="Camasses A."/>
            <person name="Casamayor A."/>
            <person name="Casas C."/>
            <person name="Cheret G."/>
            <person name="Cziepluch C."/>
            <person name="Daignan-Fornier B."/>
            <person name="Dang V.-D."/>
            <person name="de Haan M."/>
            <person name="Delius H."/>
            <person name="Durand P."/>
            <person name="Fairhead C."/>
            <person name="Feldmann H."/>
            <person name="Gaillon L."/>
            <person name="Galisson F."/>
            <person name="Gamo F.-J."/>
            <person name="Gancedo C."/>
            <person name="Goffeau A."/>
            <person name="Goulding S.E."/>
            <person name="Grivell L.A."/>
            <person name="Habbig B."/>
            <person name="Hand N.J."/>
            <person name="Hani J."/>
            <person name="Hattenhorst U."/>
            <person name="Hebling U."/>
            <person name="Hernando Y."/>
            <person name="Herrero E."/>
            <person name="Heumann K."/>
            <person name="Hiesel R."/>
            <person name="Hilger F."/>
            <person name="Hofmann B."/>
            <person name="Hollenberg C.P."/>
            <person name="Hughes B."/>
            <person name="Jauniaux J.-C."/>
            <person name="Kalogeropoulos A."/>
            <person name="Katsoulou C."/>
            <person name="Kordes E."/>
            <person name="Lafuente M.J."/>
            <person name="Landt O."/>
            <person name="Louis E.J."/>
            <person name="Maarse A.C."/>
            <person name="Madania A."/>
            <person name="Mannhaupt G."/>
            <person name="Marck C."/>
            <person name="Martin R.P."/>
            <person name="Mewes H.-W."/>
            <person name="Michaux G."/>
            <person name="Paces V."/>
            <person name="Parle-McDermott A.G."/>
            <person name="Pearson B.M."/>
            <person name="Perrin A."/>
            <person name="Pettersson B."/>
            <person name="Poch O."/>
            <person name="Pohl T.M."/>
            <person name="Poirey R."/>
            <person name="Portetelle D."/>
            <person name="Pujol A."/>
            <person name="Purnelle B."/>
            <person name="Ramezani Rad M."/>
            <person name="Rechmann S."/>
            <person name="Schwager C."/>
            <person name="Schweizer M."/>
            <person name="Sor F."/>
            <person name="Sterky F."/>
            <person name="Tarassov I.A."/>
            <person name="Teodoru C."/>
            <person name="Tettelin H."/>
            <person name="Thierry A."/>
            <person name="Tobiasch E."/>
            <person name="Tzermia M."/>
            <person name="Uhlen M."/>
            <person name="Unseld M."/>
            <person name="Valens M."/>
            <person name="Vandenbol M."/>
            <person name="Vetter I."/>
            <person name="Vlcek C."/>
            <person name="Voet M."/>
            <person name="Volckaert G."/>
            <person name="Voss H."/>
            <person name="Wambutt R."/>
            <person name="Wedler H."/>
            <person name="Wiemann S."/>
            <person name="Winsor B."/>
            <person name="Wolfe K.H."/>
            <person name="Zollner A."/>
            <person name="Zumstein E."/>
            <person name="Kleine K."/>
        </authorList>
    </citation>
    <scope>NUCLEOTIDE SEQUENCE [LARGE SCALE GENOMIC DNA]</scope>
    <source>
        <strain>ATCC 204508 / S288c</strain>
    </source>
</reference>
<reference key="2">
    <citation type="journal article" date="2014" name="G3 (Bethesda)">
        <title>The reference genome sequence of Saccharomyces cerevisiae: Then and now.</title>
        <authorList>
            <person name="Engel S.R."/>
            <person name="Dietrich F.S."/>
            <person name="Fisk D.G."/>
            <person name="Binkley G."/>
            <person name="Balakrishnan R."/>
            <person name="Costanzo M.C."/>
            <person name="Dwight S.S."/>
            <person name="Hitz B.C."/>
            <person name="Karra K."/>
            <person name="Nash R.S."/>
            <person name="Weng S."/>
            <person name="Wong E.D."/>
            <person name="Lloyd P."/>
            <person name="Skrzypek M.S."/>
            <person name="Miyasato S.R."/>
            <person name="Simison M."/>
            <person name="Cherry J.M."/>
        </authorList>
    </citation>
    <scope>GENOME REANNOTATION</scope>
    <source>
        <strain>ATCC 204508 / S288c</strain>
    </source>
</reference>
<reference key="3">
    <citation type="journal article" date="2002" name="J. Biol. Chem.">
        <title>Transcriptional profiling identifies two members of the ATP-binding cassette transporter superfamily required for sterol uptake in yeast.</title>
        <authorList>
            <person name="Wilcox L.J."/>
            <person name="Balderes D.A."/>
            <person name="Wharton B."/>
            <person name="Tinkelenberg A.H."/>
            <person name="Rao G."/>
            <person name="Sturley S.L."/>
        </authorList>
    </citation>
    <scope>FUNCTION</scope>
</reference>
<sequence length="1394" mass="157751">MSISKYFTPVADGSLTFNGANIQFGADAQGESKKSYDAEDSMPNPANQLNDITFQAEAGEMVLVLGYPTSTLFKTLFHGKTSLSYSPPGSIKFKNNEFKSFSEKCPHQIIYNNEQDVHFPFLTVEQTIDFALSCKFDIPKGERDQIRNELLREFGLSHVLKTIVGNDFFRGVSGGERKRISIIETFIANGSVYLWDNSTKGLDSATALDFLEILRKMAKATRSVNLVRISQASDKIVDKFDKILMLSDSYQLFYGTVDECLTYFRDTLGIEKDPNDCIIEYLTSILNFQFKNKNLGNLSNSSSASVLKTATGEVTKYTYNSDFDLYDQWKHSSYYRNIKQQIQGSSIDDSIKEVDPSDVSPIFNIPLKKQLLFCTKRAFQRSLGDKAYMTAQFISVVIQSLVIGSLFYEIPLTTIGSYSRGSLTFFSILFFTFLSLADMPIAFQRQPVVKKQSQLHFYTNWVETLSTTVFDYCFKLCLVIVFSIILYFLAHLQYKAARFFIFLLFLSFYNFCMVSLFALTTLVAPTISVANLFAGILLLAIAMYASYVIYLKNMHPWFVWIAYLNPAMYAMEAILSNELYNLKLDCSETIVPRGPTYNDVPFSHKACAWQGATLGNDYVRGRDYLKQGLSYTYHHVWRNFGIIIGFLVFFIACTLFASQYIKPYFNKDEIERNNSRLTRWLPFLNKKRGTRSSARNDSKYVGIPKSHSVSSSSSSLSAVPYQISPSNKEMALNDYNEQPITETVETQKHIISWKNINYTVGTKKLINNASGFISSGLTALMGESGAGKTTLLNVLSQRVETGVVSGEILIDGHPLTDEDAFKRSIGFVQQQDLHLDLLSVKESLEISCLLRGDGDRAYLDTVSNLLKLPSDILVADLNPTQRKLLSIGVELVTKPSLLLFLDEPTSGLDAEAALTIVKFLKQLSLQGQAIFCTIHQPSKSVISHFDNIFLLKRGGECVFFGPMDDACGYFMSHDNTLVYDKEHDNPADFVIDAVGNSNSSAGKDTAEEALTLNKEAIDWSALWESSVEKKLVKKETARLEDDARASGVDYTTSLWKQPSYLQQLALITRRQYICTKRDMTYVMAKYCLNGGAGLFIGFSFWHIKHNIIGLQDSIFFCFMALCVSSPLINQIQDKALKTKEVYVAREARSNTYHWTVLLLSQSIIELPLALTSSTLFFVCAFFSCGFNNAGWSAGVFFLNYMLFAAYYSTLGLWLIYTAPNLQTAAVFVAFIYSFTASFCGVMQPYSLFPTFWKFMYRVSPYTYFVETFVSILLHNWEIKCDMSEMVPGQPLTGQSCGQFMEAFIEEYGGYLHNKNTFTVCAYCTYTVGDDFLKNENMSYDHVWRNFGIEWAFVGFNFFAMFAGYYLTYVARIWPKVFKIITKVIPHRGKKPVQN</sequence>
<organism>
    <name type="scientific">Saccharomyces cerevisiae (strain ATCC 204508 / S288c)</name>
    <name type="common">Baker's yeast</name>
    <dbReference type="NCBI Taxonomy" id="559292"/>
    <lineage>
        <taxon>Eukaryota</taxon>
        <taxon>Fungi</taxon>
        <taxon>Dikarya</taxon>
        <taxon>Ascomycota</taxon>
        <taxon>Saccharomycotina</taxon>
        <taxon>Saccharomycetes</taxon>
        <taxon>Saccharomycetales</taxon>
        <taxon>Saccharomycetaceae</taxon>
        <taxon>Saccharomyces</taxon>
    </lineage>
</organism>
<keyword id="KW-0067">ATP-binding</keyword>
<keyword id="KW-0472">Membrane</keyword>
<keyword id="KW-0547">Nucleotide-binding</keyword>
<keyword id="KW-1185">Reference proteome</keyword>
<keyword id="KW-0677">Repeat</keyword>
<keyword id="KW-0812">Transmembrane</keyword>
<keyword id="KW-1133">Transmembrane helix</keyword>
<keyword id="KW-0813">Transport</keyword>
<name>AUS1_YEAST</name>
<comment type="function">
    <text evidence="3">Transporter involved in the uptake of sterol.</text>
</comment>
<comment type="subcellular location">
    <subcellularLocation>
        <location evidence="4">Membrane</location>
        <topology evidence="4">Multi-pass membrane protein</topology>
    </subcellularLocation>
</comment>
<comment type="similarity">
    <text evidence="4">Belongs to the ABC transporter superfamily. ABCG family. PDR (TC 3.A.1.205) subfamily.</text>
</comment>